<reference key="1">
    <citation type="journal article" date="2006" name="Lancet">
        <title>Complete genome sequence of USA300, an epidemic clone of community-acquired meticillin-resistant Staphylococcus aureus.</title>
        <authorList>
            <person name="Diep B.A."/>
            <person name="Gill S.R."/>
            <person name="Chang R.F."/>
            <person name="Phan T.H."/>
            <person name="Chen J.H."/>
            <person name="Davidson M.G."/>
            <person name="Lin F."/>
            <person name="Lin J."/>
            <person name="Carleton H.A."/>
            <person name="Mongodin E.F."/>
            <person name="Sensabaugh G.F."/>
            <person name="Perdreau-Remington F."/>
        </authorList>
    </citation>
    <scope>NUCLEOTIDE SEQUENCE [LARGE SCALE GENOMIC DNA]</scope>
    <source>
        <strain>USA300</strain>
    </source>
</reference>
<dbReference type="EC" id="7.2.2.11" evidence="1"/>
<dbReference type="EMBL" id="CP000255">
    <property type="protein sequence ID" value="ABD21447.1"/>
    <property type="molecule type" value="Genomic_DNA"/>
</dbReference>
<dbReference type="RefSeq" id="WP_000571258.1">
    <property type="nucleotide sequence ID" value="NZ_CP027476.1"/>
</dbReference>
<dbReference type="SMR" id="Q2FH58"/>
<dbReference type="KEGG" id="saa:SAUSA300_1273"/>
<dbReference type="HOGENOM" id="CLU_000604_1_23_9"/>
<dbReference type="OMA" id="CDRTVHW"/>
<dbReference type="Proteomes" id="UP000001939">
    <property type="component" value="Chromosome"/>
</dbReference>
<dbReference type="GO" id="GO:0005886">
    <property type="term" value="C:plasma membrane"/>
    <property type="evidence" value="ECO:0007669"/>
    <property type="project" value="UniProtKB-SubCell"/>
</dbReference>
<dbReference type="GO" id="GO:0015413">
    <property type="term" value="F:ABC-type nickel transporter activity"/>
    <property type="evidence" value="ECO:0007669"/>
    <property type="project" value="UniProtKB-EC"/>
</dbReference>
<dbReference type="GO" id="GO:0005524">
    <property type="term" value="F:ATP binding"/>
    <property type="evidence" value="ECO:0007669"/>
    <property type="project" value="UniProtKB-KW"/>
</dbReference>
<dbReference type="GO" id="GO:0016887">
    <property type="term" value="F:ATP hydrolysis activity"/>
    <property type="evidence" value="ECO:0007669"/>
    <property type="project" value="InterPro"/>
</dbReference>
<dbReference type="CDD" id="cd03257">
    <property type="entry name" value="ABC_NikE_OppD_transporters"/>
    <property type="match status" value="1"/>
</dbReference>
<dbReference type="FunFam" id="3.40.50.300:FF:001829">
    <property type="entry name" value="Nickel import system ATP-binding protein NikE"/>
    <property type="match status" value="1"/>
</dbReference>
<dbReference type="Gene3D" id="3.40.50.300">
    <property type="entry name" value="P-loop containing nucleotide triphosphate hydrolases"/>
    <property type="match status" value="1"/>
</dbReference>
<dbReference type="InterPro" id="IPR003593">
    <property type="entry name" value="AAA+_ATPase"/>
</dbReference>
<dbReference type="InterPro" id="IPR050319">
    <property type="entry name" value="ABC_transp_ATP-bind"/>
</dbReference>
<dbReference type="InterPro" id="IPR003439">
    <property type="entry name" value="ABC_transporter-like_ATP-bd"/>
</dbReference>
<dbReference type="InterPro" id="IPR027417">
    <property type="entry name" value="P-loop_NTPase"/>
</dbReference>
<dbReference type="PANTHER" id="PTHR43776">
    <property type="entry name" value="TRANSPORT ATP-BINDING PROTEIN"/>
    <property type="match status" value="1"/>
</dbReference>
<dbReference type="Pfam" id="PF00005">
    <property type="entry name" value="ABC_tran"/>
    <property type="match status" value="1"/>
</dbReference>
<dbReference type="SMART" id="SM00382">
    <property type="entry name" value="AAA"/>
    <property type="match status" value="1"/>
</dbReference>
<dbReference type="SUPFAM" id="SSF52540">
    <property type="entry name" value="P-loop containing nucleoside triphosphate hydrolases"/>
    <property type="match status" value="1"/>
</dbReference>
<dbReference type="PROSITE" id="PS50893">
    <property type="entry name" value="ABC_TRANSPORTER_2"/>
    <property type="match status" value="1"/>
</dbReference>
<comment type="function">
    <text evidence="1">Part of the ABC transporter complex NikABCDE (Opp2) involved in nickel import. Probably responsible for energy coupling to the transport system.</text>
</comment>
<comment type="catalytic activity">
    <reaction evidence="1">
        <text>Ni(2+)(out) + ATP + H2O = Ni(2+)(in) + ADP + phosphate + H(+)</text>
        <dbReference type="Rhea" id="RHEA:15557"/>
        <dbReference type="ChEBI" id="CHEBI:15377"/>
        <dbReference type="ChEBI" id="CHEBI:15378"/>
        <dbReference type="ChEBI" id="CHEBI:30616"/>
        <dbReference type="ChEBI" id="CHEBI:43474"/>
        <dbReference type="ChEBI" id="CHEBI:49786"/>
        <dbReference type="ChEBI" id="CHEBI:456216"/>
        <dbReference type="EC" id="7.2.2.11"/>
    </reaction>
    <physiologicalReaction direction="left-to-right" evidence="1">
        <dbReference type="Rhea" id="RHEA:15558"/>
    </physiologicalReaction>
</comment>
<comment type="subunit">
    <text evidence="1">The complex is composed of two ATP-binding proteins (NikD and NikE), two transmembrane proteins (NikB and NikC) and a solute-binding protein (NikA).</text>
</comment>
<comment type="subcellular location">
    <subcellularLocation>
        <location evidence="3">Cell membrane</location>
        <topology evidence="3">Peripheral membrane protein</topology>
    </subcellularLocation>
</comment>
<comment type="similarity">
    <text evidence="3">Belongs to the ABC transporter superfamily.</text>
</comment>
<proteinExistence type="inferred from homology"/>
<protein>
    <recommendedName>
        <fullName evidence="1">Nickel import system ATP-binding protein NikE</fullName>
        <ecNumber evidence="1">7.2.2.11</ecNumber>
    </recommendedName>
</protein>
<name>NIKE_STAA3</name>
<accession>Q2FH58</accession>
<gene>
    <name evidence="1" type="primary">nikE</name>
    <name type="synonym">oppF2</name>
    <name type="ordered locus">SAUSA300_1273</name>
</gene>
<sequence>MIELKHVTFGYNKKQMVLQDINITIPDGENVGILGESGCGKSTLASLVLGLFKPVKGEIYLSDNAVLPIFQHPLTSFNPDWTIETSLKEALYYYRGLTDNTAQDQLLLQHLSTFELNAQLLTKLPSEVSGGQLQRFNVMRSLLAQPRVLICDEITSNLDVIAEQNVINILKAQTITNLNHFIVISHDLSVLQRLVNRIIVLKDGMIVDDFAIEELFNVDRHPYTKELVQAFSY</sequence>
<keyword id="KW-0067">ATP-binding</keyword>
<keyword id="KW-1003">Cell membrane</keyword>
<keyword id="KW-0406">Ion transport</keyword>
<keyword id="KW-0472">Membrane</keyword>
<keyword id="KW-0533">Nickel</keyword>
<keyword id="KW-0921">Nickel transport</keyword>
<keyword id="KW-0547">Nucleotide-binding</keyword>
<keyword id="KW-1278">Translocase</keyword>
<keyword id="KW-0813">Transport</keyword>
<feature type="chain" id="PRO_0000276808" description="Nickel import system ATP-binding protein NikE">
    <location>
        <begin position="1"/>
        <end position="233"/>
    </location>
</feature>
<feature type="domain" description="ABC transporter" evidence="2">
    <location>
        <begin position="2"/>
        <end position="228"/>
    </location>
</feature>
<feature type="binding site" evidence="2">
    <location>
        <begin position="35"/>
        <end position="42"/>
    </location>
    <ligand>
        <name>ATP</name>
        <dbReference type="ChEBI" id="CHEBI:30616"/>
    </ligand>
</feature>
<evidence type="ECO:0000250" key="1">
    <source>
        <dbReference type="UniProtKB" id="Q2FYQ8"/>
    </source>
</evidence>
<evidence type="ECO:0000255" key="2">
    <source>
        <dbReference type="PROSITE-ProRule" id="PRU00434"/>
    </source>
</evidence>
<evidence type="ECO:0000305" key="3"/>
<organism>
    <name type="scientific">Staphylococcus aureus (strain USA300)</name>
    <dbReference type="NCBI Taxonomy" id="367830"/>
    <lineage>
        <taxon>Bacteria</taxon>
        <taxon>Bacillati</taxon>
        <taxon>Bacillota</taxon>
        <taxon>Bacilli</taxon>
        <taxon>Bacillales</taxon>
        <taxon>Staphylococcaceae</taxon>
        <taxon>Staphylococcus</taxon>
    </lineage>
</organism>